<reference key="1">
    <citation type="journal article" date="2008" name="PLoS Genet.">
        <title>The genome of Borrelia recurrentis, the agent of deadly louse-borne relapsing fever, is a degraded subset of tick-borne Borrelia duttonii.</title>
        <authorList>
            <person name="Lescot M."/>
            <person name="Audic S."/>
            <person name="Robert C."/>
            <person name="Nguyen T.T."/>
            <person name="Blanc G."/>
            <person name="Cutler S.J."/>
            <person name="Wincker P."/>
            <person name="Couloux A."/>
            <person name="Claverie J.-M."/>
            <person name="Raoult D."/>
            <person name="Drancourt M."/>
        </authorList>
    </citation>
    <scope>NUCLEOTIDE SEQUENCE [LARGE SCALE GENOMIC DNA]</scope>
    <source>
        <strain>Ly</strain>
    </source>
</reference>
<feature type="chain" id="PRO_1000189262" description="Tyrosine--tRNA ligase">
    <location>
        <begin position="1"/>
        <end position="406"/>
    </location>
</feature>
<feature type="domain" description="S4 RNA-binding" evidence="1">
    <location>
        <begin position="341"/>
        <end position="405"/>
    </location>
</feature>
<feature type="short sequence motif" description="'HIGH' region">
    <location>
        <begin position="40"/>
        <end position="49"/>
    </location>
</feature>
<feature type="short sequence motif" description="'KMSKS' region">
    <location>
        <begin position="227"/>
        <end position="231"/>
    </location>
</feature>
<feature type="binding site" evidence="1">
    <location>
        <position position="35"/>
    </location>
    <ligand>
        <name>L-tyrosine</name>
        <dbReference type="ChEBI" id="CHEBI:58315"/>
    </ligand>
</feature>
<feature type="binding site" evidence="1">
    <location>
        <position position="167"/>
    </location>
    <ligand>
        <name>L-tyrosine</name>
        <dbReference type="ChEBI" id="CHEBI:58315"/>
    </ligand>
</feature>
<feature type="binding site" evidence="1">
    <location>
        <position position="171"/>
    </location>
    <ligand>
        <name>L-tyrosine</name>
        <dbReference type="ChEBI" id="CHEBI:58315"/>
    </ligand>
</feature>
<feature type="binding site" evidence="1">
    <location>
        <position position="230"/>
    </location>
    <ligand>
        <name>ATP</name>
        <dbReference type="ChEBI" id="CHEBI:30616"/>
    </ligand>
</feature>
<sequence length="406" mass="45997">MNLSLKVLDKRGFLKQCTNLEELSTLMDREKIVFYVGVDATSASLHIGHLIPFMVMLHLQRQGHIPIILIGGGTTKIGDPSGKDSMRKILLKEDIDENVKTISSQLLKIIDLSNGGYILNNAEWLDGINYIEFLREVGIYFSVNRMLSFETYKRRLKDGLSFIEFNYQLLQSYDFYMLSRMKNCKLQIGGDDQWGNIVSGVDLVNRKSGNKVFGLTLPLITRSDGKKMGKSEKGAVYLDSELYSVYDFYQYFRNIPDLDVKKFLYLFTFLEEEEIERIASVKGQLLNNAKEILAFEITKIVHGKDEALKASSAAKAAFKGGDGRADIPFFKLELTNLEESILLVDLMVLAKVVSSKSEARRLIDSGGVYIDKVRVGDQNYCLCKDNFINGEIELKIGKKKILRIVL</sequence>
<protein>
    <recommendedName>
        <fullName evidence="1">Tyrosine--tRNA ligase</fullName>
        <ecNumber evidence="1">6.1.1.1</ecNumber>
    </recommendedName>
    <alternativeName>
        <fullName evidence="1">Tyrosyl-tRNA synthetase</fullName>
        <shortName evidence="1">TyrRS</shortName>
    </alternativeName>
</protein>
<gene>
    <name evidence="1" type="primary">tyrS</name>
    <name type="ordered locus">BDU_365</name>
</gene>
<keyword id="KW-0030">Aminoacyl-tRNA synthetase</keyword>
<keyword id="KW-0067">ATP-binding</keyword>
<keyword id="KW-0963">Cytoplasm</keyword>
<keyword id="KW-0436">Ligase</keyword>
<keyword id="KW-0547">Nucleotide-binding</keyword>
<keyword id="KW-0648">Protein biosynthesis</keyword>
<keyword id="KW-0694">RNA-binding</keyword>
<organism>
    <name type="scientific">Borrelia duttonii (strain Ly)</name>
    <dbReference type="NCBI Taxonomy" id="412419"/>
    <lineage>
        <taxon>Bacteria</taxon>
        <taxon>Pseudomonadati</taxon>
        <taxon>Spirochaetota</taxon>
        <taxon>Spirochaetia</taxon>
        <taxon>Spirochaetales</taxon>
        <taxon>Borreliaceae</taxon>
        <taxon>Borrelia</taxon>
    </lineage>
</organism>
<proteinExistence type="inferred from homology"/>
<comment type="function">
    <text evidence="1">Catalyzes the attachment of tyrosine to tRNA(Tyr) in a two-step reaction: tyrosine is first activated by ATP to form Tyr-AMP and then transferred to the acceptor end of tRNA(Tyr).</text>
</comment>
<comment type="catalytic activity">
    <reaction evidence="1">
        <text>tRNA(Tyr) + L-tyrosine + ATP = L-tyrosyl-tRNA(Tyr) + AMP + diphosphate + H(+)</text>
        <dbReference type="Rhea" id="RHEA:10220"/>
        <dbReference type="Rhea" id="RHEA-COMP:9706"/>
        <dbReference type="Rhea" id="RHEA-COMP:9707"/>
        <dbReference type="ChEBI" id="CHEBI:15378"/>
        <dbReference type="ChEBI" id="CHEBI:30616"/>
        <dbReference type="ChEBI" id="CHEBI:33019"/>
        <dbReference type="ChEBI" id="CHEBI:58315"/>
        <dbReference type="ChEBI" id="CHEBI:78442"/>
        <dbReference type="ChEBI" id="CHEBI:78536"/>
        <dbReference type="ChEBI" id="CHEBI:456215"/>
        <dbReference type="EC" id="6.1.1.1"/>
    </reaction>
</comment>
<comment type="subunit">
    <text evidence="1">Homodimer.</text>
</comment>
<comment type="subcellular location">
    <subcellularLocation>
        <location evidence="1">Cytoplasm</location>
    </subcellularLocation>
</comment>
<comment type="similarity">
    <text evidence="1">Belongs to the class-I aminoacyl-tRNA synthetase family. TyrS type 1 subfamily.</text>
</comment>
<name>SYY_BORDL</name>
<accession>B5RLQ9</accession>
<evidence type="ECO:0000255" key="1">
    <source>
        <dbReference type="HAMAP-Rule" id="MF_02006"/>
    </source>
</evidence>
<dbReference type="EC" id="6.1.1.1" evidence="1"/>
<dbReference type="EMBL" id="CP000976">
    <property type="protein sequence ID" value="ACH93317.1"/>
    <property type="molecule type" value="Genomic_DNA"/>
</dbReference>
<dbReference type="RefSeq" id="WP_012538128.1">
    <property type="nucleotide sequence ID" value="NC_011229.1"/>
</dbReference>
<dbReference type="SMR" id="B5RLQ9"/>
<dbReference type="STRING" id="412419.BDU_365"/>
<dbReference type="KEGG" id="bdu:BDU_365"/>
<dbReference type="eggNOG" id="COG0162">
    <property type="taxonomic scope" value="Bacteria"/>
</dbReference>
<dbReference type="HOGENOM" id="CLU_024003_0_3_12"/>
<dbReference type="OrthoDB" id="9804243at2"/>
<dbReference type="Proteomes" id="UP000000611">
    <property type="component" value="Chromosome"/>
</dbReference>
<dbReference type="GO" id="GO:0005829">
    <property type="term" value="C:cytosol"/>
    <property type="evidence" value="ECO:0007669"/>
    <property type="project" value="TreeGrafter"/>
</dbReference>
<dbReference type="GO" id="GO:0005524">
    <property type="term" value="F:ATP binding"/>
    <property type="evidence" value="ECO:0007669"/>
    <property type="project" value="UniProtKB-UniRule"/>
</dbReference>
<dbReference type="GO" id="GO:0003723">
    <property type="term" value="F:RNA binding"/>
    <property type="evidence" value="ECO:0007669"/>
    <property type="project" value="UniProtKB-KW"/>
</dbReference>
<dbReference type="GO" id="GO:0004831">
    <property type="term" value="F:tyrosine-tRNA ligase activity"/>
    <property type="evidence" value="ECO:0007669"/>
    <property type="project" value="UniProtKB-UniRule"/>
</dbReference>
<dbReference type="GO" id="GO:0006437">
    <property type="term" value="P:tyrosyl-tRNA aminoacylation"/>
    <property type="evidence" value="ECO:0007669"/>
    <property type="project" value="UniProtKB-UniRule"/>
</dbReference>
<dbReference type="CDD" id="cd00165">
    <property type="entry name" value="S4"/>
    <property type="match status" value="1"/>
</dbReference>
<dbReference type="CDD" id="cd00805">
    <property type="entry name" value="TyrRS_core"/>
    <property type="match status" value="1"/>
</dbReference>
<dbReference type="FunFam" id="1.10.240.10:FF:000001">
    <property type="entry name" value="Tyrosine--tRNA ligase"/>
    <property type="match status" value="1"/>
</dbReference>
<dbReference type="Gene3D" id="3.40.50.620">
    <property type="entry name" value="HUPs"/>
    <property type="match status" value="1"/>
</dbReference>
<dbReference type="Gene3D" id="3.10.290.10">
    <property type="entry name" value="RNA-binding S4 domain"/>
    <property type="match status" value="1"/>
</dbReference>
<dbReference type="Gene3D" id="1.10.240.10">
    <property type="entry name" value="Tyrosyl-Transfer RNA Synthetase"/>
    <property type="match status" value="1"/>
</dbReference>
<dbReference type="HAMAP" id="MF_02006">
    <property type="entry name" value="Tyr_tRNA_synth_type1"/>
    <property type="match status" value="1"/>
</dbReference>
<dbReference type="InterPro" id="IPR002305">
    <property type="entry name" value="aa-tRNA-synth_Ic"/>
</dbReference>
<dbReference type="InterPro" id="IPR014729">
    <property type="entry name" value="Rossmann-like_a/b/a_fold"/>
</dbReference>
<dbReference type="InterPro" id="IPR002942">
    <property type="entry name" value="S4_RNA-bd"/>
</dbReference>
<dbReference type="InterPro" id="IPR036986">
    <property type="entry name" value="S4_RNA-bd_sf"/>
</dbReference>
<dbReference type="InterPro" id="IPR054608">
    <property type="entry name" value="SYY-like_C"/>
</dbReference>
<dbReference type="InterPro" id="IPR002307">
    <property type="entry name" value="Tyr-tRNA-ligase"/>
</dbReference>
<dbReference type="InterPro" id="IPR024088">
    <property type="entry name" value="Tyr-tRNA-ligase_bac-type"/>
</dbReference>
<dbReference type="InterPro" id="IPR024107">
    <property type="entry name" value="Tyr-tRNA-ligase_bac_1"/>
</dbReference>
<dbReference type="NCBIfam" id="TIGR00234">
    <property type="entry name" value="tyrS"/>
    <property type="match status" value="1"/>
</dbReference>
<dbReference type="PANTHER" id="PTHR11766:SF0">
    <property type="entry name" value="TYROSINE--TRNA LIGASE, MITOCHONDRIAL"/>
    <property type="match status" value="1"/>
</dbReference>
<dbReference type="PANTHER" id="PTHR11766">
    <property type="entry name" value="TYROSYL-TRNA SYNTHETASE"/>
    <property type="match status" value="1"/>
</dbReference>
<dbReference type="Pfam" id="PF22421">
    <property type="entry name" value="SYY_C-terminal"/>
    <property type="match status" value="1"/>
</dbReference>
<dbReference type="Pfam" id="PF00579">
    <property type="entry name" value="tRNA-synt_1b"/>
    <property type="match status" value="1"/>
</dbReference>
<dbReference type="PRINTS" id="PR01040">
    <property type="entry name" value="TRNASYNTHTYR"/>
</dbReference>
<dbReference type="SMART" id="SM00363">
    <property type="entry name" value="S4"/>
    <property type="match status" value="1"/>
</dbReference>
<dbReference type="SUPFAM" id="SSF55174">
    <property type="entry name" value="Alpha-L RNA-binding motif"/>
    <property type="match status" value="1"/>
</dbReference>
<dbReference type="SUPFAM" id="SSF52374">
    <property type="entry name" value="Nucleotidylyl transferase"/>
    <property type="match status" value="1"/>
</dbReference>
<dbReference type="PROSITE" id="PS50889">
    <property type="entry name" value="S4"/>
    <property type="match status" value="1"/>
</dbReference>